<protein>
    <recommendedName>
        <fullName evidence="1">Ribulose bisphosphate carboxylase small subunit, chloroplastic 1</fullName>
        <shortName evidence="1">RuBisCO small subunit 1</shortName>
    </recommendedName>
</protein>
<evidence type="ECO:0000255" key="1">
    <source>
        <dbReference type="HAMAP-Rule" id="MF_00860"/>
    </source>
</evidence>
<evidence type="ECO:0000269" key="2">
    <source>
    </source>
</evidence>
<evidence type="ECO:0000305" key="3">
    <source>
    </source>
</evidence>
<evidence type="ECO:0007744" key="4">
    <source>
        <dbReference type="PDB" id="1RBO"/>
    </source>
</evidence>
<evidence type="ECO:0007744" key="5">
    <source>
        <dbReference type="PDB" id="1RCO"/>
    </source>
</evidence>
<evidence type="ECO:0007744" key="6">
    <source>
        <dbReference type="PDB" id="1RCX"/>
    </source>
</evidence>
<evidence type="ECO:0007744" key="7">
    <source>
        <dbReference type="PDB" id="1RXO"/>
    </source>
</evidence>
<evidence type="ECO:0007829" key="8">
    <source>
        <dbReference type="PDB" id="8RUC"/>
    </source>
</evidence>
<name>RBS1_SPIOL</name>
<dbReference type="PIR" id="A01089">
    <property type="entry name" value="RKSPS"/>
</dbReference>
<dbReference type="PDB" id="1RBO">
    <property type="method" value="X-ray"/>
    <property type="resolution" value="2.30 A"/>
    <property type="chains" value="C/F/I/S=1-123"/>
</dbReference>
<dbReference type="PDB" id="1RCO">
    <property type="method" value="X-ray"/>
    <property type="resolution" value="2.30 A"/>
    <property type="chains" value="C/F/I/M/P/S/T/W=1-123"/>
</dbReference>
<dbReference type="PDB" id="1RCX">
    <property type="method" value="X-ray"/>
    <property type="resolution" value="2.40 A"/>
    <property type="chains" value="C/F/I/M/P/S/T/W=1-123"/>
</dbReference>
<dbReference type="PDB" id="1RXO">
    <property type="method" value="X-ray"/>
    <property type="resolution" value="2.20 A"/>
    <property type="chains" value="C/F/I/S=1-123"/>
</dbReference>
<dbReference type="PDB" id="8RUC">
    <property type="method" value="X-ray"/>
    <property type="resolution" value="1.60 A"/>
    <property type="chains" value="I/J/K/L=1-123"/>
</dbReference>
<dbReference type="PDBsum" id="1RBO"/>
<dbReference type="PDBsum" id="1RCO"/>
<dbReference type="PDBsum" id="1RCX"/>
<dbReference type="PDBsum" id="1RXO"/>
<dbReference type="PDBsum" id="8RUC"/>
<dbReference type="SMR" id="P00870"/>
<dbReference type="DIP" id="DIP-27640N"/>
<dbReference type="IntAct" id="P00870">
    <property type="interactions" value="1"/>
</dbReference>
<dbReference type="Allergome" id="3814">
    <property type="allergen name" value="Spi o RuBisCO"/>
</dbReference>
<dbReference type="BRENDA" id="4.1.1.39">
    <property type="organism ID" value="5812"/>
</dbReference>
<dbReference type="EvolutionaryTrace" id="P00870"/>
<dbReference type="Proteomes" id="UP001155700">
    <property type="component" value="Unplaced"/>
</dbReference>
<dbReference type="GO" id="GO:0009507">
    <property type="term" value="C:chloroplast"/>
    <property type="evidence" value="ECO:0007669"/>
    <property type="project" value="UniProtKB-SubCell"/>
</dbReference>
<dbReference type="GO" id="GO:0016984">
    <property type="term" value="F:ribulose-bisphosphate carboxylase activity"/>
    <property type="evidence" value="ECO:0007669"/>
    <property type="project" value="UniProtKB-UniRule"/>
</dbReference>
<dbReference type="GO" id="GO:0009853">
    <property type="term" value="P:photorespiration"/>
    <property type="evidence" value="ECO:0007669"/>
    <property type="project" value="UniProtKB-KW"/>
</dbReference>
<dbReference type="GO" id="GO:0019253">
    <property type="term" value="P:reductive pentose-phosphate cycle"/>
    <property type="evidence" value="ECO:0007669"/>
    <property type="project" value="UniProtKB-UniRule"/>
</dbReference>
<dbReference type="CDD" id="cd03527">
    <property type="entry name" value="RuBisCO_small"/>
    <property type="match status" value="1"/>
</dbReference>
<dbReference type="FunFam" id="3.30.190.10:FF:000001">
    <property type="entry name" value="Ribulose bisphosphate carboxylase small chain, chloroplastic"/>
    <property type="match status" value="1"/>
</dbReference>
<dbReference type="Gene3D" id="3.30.190.10">
    <property type="entry name" value="Ribulose bisphosphate carboxylase, small subunit"/>
    <property type="match status" value="1"/>
</dbReference>
<dbReference type="HAMAP" id="MF_00859">
    <property type="entry name" value="RuBisCO_S_bact"/>
    <property type="match status" value="1"/>
</dbReference>
<dbReference type="InterPro" id="IPR024681">
    <property type="entry name" value="RuBisCO_ssu"/>
</dbReference>
<dbReference type="InterPro" id="IPR000894">
    <property type="entry name" value="RuBisCO_ssu_dom"/>
</dbReference>
<dbReference type="InterPro" id="IPR036385">
    <property type="entry name" value="RuBisCO_ssu_sf"/>
</dbReference>
<dbReference type="PANTHER" id="PTHR31262">
    <property type="entry name" value="RIBULOSE BISPHOSPHATE CARBOXYLASE SMALL CHAIN 1, CHLOROPLASTIC"/>
    <property type="match status" value="1"/>
</dbReference>
<dbReference type="PANTHER" id="PTHR31262:SF10">
    <property type="entry name" value="RIBULOSE BISPHOSPHATE CARBOXYLASE SMALL SUBUNIT 1A, CHLOROPLASTIC-RELATED"/>
    <property type="match status" value="1"/>
</dbReference>
<dbReference type="Pfam" id="PF00101">
    <property type="entry name" value="RuBisCO_small"/>
    <property type="match status" value="1"/>
</dbReference>
<dbReference type="PRINTS" id="PR00152">
    <property type="entry name" value="RUBISCOSMALL"/>
</dbReference>
<dbReference type="SMART" id="SM00961">
    <property type="entry name" value="RuBisCO_small"/>
    <property type="match status" value="1"/>
</dbReference>
<dbReference type="SUPFAM" id="SSF55239">
    <property type="entry name" value="RuBisCO, small subunit"/>
    <property type="match status" value="1"/>
</dbReference>
<comment type="function">
    <text evidence="1 3">RuBisCO catalyzes two reactions: the carboxylation of D-ribulose 1,5-bisphosphate, the primary event in carbon dioxide fixation, as well as the oxidative fragmentation of the pentose substrate. Both reactions occur simultaneously and in competition at the same active site. Although the small subunit is not catalytic it is essential for maximal activity.</text>
</comment>
<comment type="subunit">
    <text evidence="1 2">Heterohexadecamer of 8 large and 8 small subunits.</text>
</comment>
<comment type="subcellular location">
    <subcellularLocation>
        <location evidence="1">Plastid</location>
        <location evidence="1">Chloroplast</location>
    </subcellularLocation>
</comment>
<comment type="miscellaneous">
    <text evidence="1 2">The basic functional RuBisCO is composed of a large chain homodimer in a 'head-to-tail' conformation. In form I RuBisCO this homodimer is arranged in a barrel-like tetramer with the small subunits forming a tetrameric 'cap' on each end of the 'barrel'.</text>
</comment>
<comment type="miscellaneous">
    <text evidence="1">This protein is expected to contain an N-terminal transit peptide but none has been predicted.</text>
</comment>
<comment type="similarity">
    <text evidence="1">Belongs to the RuBisCO small chain family.</text>
</comment>
<comment type="online information" name="Protein Spotlight">
    <link uri="https://www.proteinspotlight.org/back_issues/038"/>
    <text>The Plant Kingdom's sloth - Issue 38 of September 2003</text>
</comment>
<accession>P00870</accession>
<gene>
    <name evidence="1" type="primary">RBCS1</name>
    <name type="synonym">RBCS</name>
</gene>
<keyword id="KW-0002">3D-structure</keyword>
<keyword id="KW-0113">Calvin cycle</keyword>
<keyword id="KW-0120">Carbon dioxide fixation</keyword>
<keyword id="KW-0150">Chloroplast</keyword>
<keyword id="KW-0903">Direct protein sequencing</keyword>
<keyword id="KW-0601">Photorespiration</keyword>
<keyword id="KW-0602">Photosynthesis</keyword>
<keyword id="KW-0934">Plastid</keyword>
<keyword id="KW-1185">Reference proteome</keyword>
<feature type="chain" id="PRO_0000198589" description="Ribulose bisphosphate carboxylase small subunit, chloroplastic 1">
    <location>
        <begin position="1"/>
        <end position="123"/>
    </location>
</feature>
<feature type="modified residue" description="Methionine derivative">
    <location>
        <position position="1"/>
    </location>
</feature>
<feature type="sequence variant">
    <original>P</original>
    <variation>Y</variation>
    <location>
        <position position="94"/>
    </location>
</feature>
<feature type="turn" evidence="8">
    <location>
        <begin position="14"/>
        <end position="17"/>
    </location>
</feature>
<feature type="helix" evidence="8">
    <location>
        <begin position="23"/>
        <end position="35"/>
    </location>
</feature>
<feature type="strand" evidence="8">
    <location>
        <begin position="39"/>
        <end position="47"/>
    </location>
</feature>
<feature type="strand" evidence="8">
    <location>
        <begin position="68"/>
        <end position="71"/>
    </location>
</feature>
<feature type="helix" evidence="8">
    <location>
        <begin position="80"/>
        <end position="93"/>
    </location>
</feature>
<feature type="strand" evidence="8">
    <location>
        <begin position="97"/>
        <end position="105"/>
    </location>
</feature>
<feature type="turn" evidence="8">
    <location>
        <begin position="106"/>
        <end position="109"/>
    </location>
</feature>
<feature type="strand" evidence="8">
    <location>
        <begin position="110"/>
        <end position="118"/>
    </location>
</feature>
<organism>
    <name type="scientific">Spinacia oleracea</name>
    <name type="common">Spinach</name>
    <dbReference type="NCBI Taxonomy" id="3562"/>
    <lineage>
        <taxon>Eukaryota</taxon>
        <taxon>Viridiplantae</taxon>
        <taxon>Streptophyta</taxon>
        <taxon>Embryophyta</taxon>
        <taxon>Tracheophyta</taxon>
        <taxon>Spermatophyta</taxon>
        <taxon>Magnoliopsida</taxon>
        <taxon>eudicotyledons</taxon>
        <taxon>Gunneridae</taxon>
        <taxon>Pentapetalae</taxon>
        <taxon>Caryophyllales</taxon>
        <taxon>Chenopodiaceae</taxon>
        <taxon>Chenopodioideae</taxon>
        <taxon>Anserineae</taxon>
        <taxon>Spinacia</taxon>
    </lineage>
</organism>
<reference key="1">
    <citation type="journal article" date="1979" name="Aust. J. Plant Physiol.">
        <title>Amino acid sequence of the small subunit of ribulose-1,5-bisphosphate carboxylase from spinach.</title>
        <authorList>
            <person name="Martin P.G."/>
        </authorList>
    </citation>
    <scope>PROTEIN SEQUENCE</scope>
</reference>
<reference key="2">
    <citation type="submission" date="1982-10" db="PIR data bank">
        <authorList>
            <person name="Martin P.G."/>
        </authorList>
    </citation>
    <scope>SEQUENCE REVISION TO 68-70</scope>
</reference>
<reference evidence="4 5" key="3">
    <citation type="journal article" date="1996" name="J. Biol. Chem.">
        <title>A common structural basis for the inhibition of ribulose 1,5-bisphosphate carboxylase by 4-carboxyarabinitol 1,5-bisphosphate and xylulose 1,5-bisphosphate.</title>
        <authorList>
            <person name="Taylor T.C."/>
            <person name="Fothergill M.D."/>
            <person name="Andersson I."/>
        </authorList>
    </citation>
    <scope>X-RAY CRYSTALLOGRAPHY (2.30 ANGSTROMS) OF INACTIVE HOLOENZYME IN COMPLEX WITH INHIBITORS 4-CABP AND XUBP</scope>
    <scope>FUNCTION</scope>
    <scope>SUBUNIT</scope>
</reference>
<reference evidence="6 7" key="4">
    <citation type="journal article" date="1997" name="J. Mol. Biol.">
        <title>The structure of the complex between rubisco and its natural substrate ribulose 1,5-bisphosphate.</title>
        <authorList>
            <person name="Taylor T.C."/>
            <person name="Andersson I."/>
        </authorList>
    </citation>
    <scope>X-RAY CRYSTALLOGRAPHY (2.20 ANGSTROMS) OF HOLOENZYME IN COMPLEX WITH SUBSTRATE AND CALCIUM IN ACTIVATED AND INACTIVATED STATE</scope>
    <scope>FUNCTION</scope>
    <scope>SUBUNIT</scope>
</reference>
<sequence length="123" mass="14283">MQVWPPLGLKKFETLSYLPPLTTEQLLAEVNYLLVKGWIPPLEFEVKDGFVYREHDKSPGYYDGRYWTMWKLPMFGGTDPAQVVNEVEEVKKAPPDAFVRFIGFNDKREVQCISFIAYKPAGY</sequence>
<proteinExistence type="evidence at protein level"/>